<keyword id="KW-0472">Membrane</keyword>
<keyword id="KW-0496">Mitochondrion</keyword>
<keyword id="KW-0999">Mitochondrion inner membrane</keyword>
<keyword id="KW-1185">Reference proteome</keyword>
<keyword id="KW-0809">Transit peptide</keyword>
<keyword id="KW-0812">Transmembrane</keyword>
<keyword id="KW-1133">Transmembrane helix</keyword>
<comment type="function">
    <text>Required for the insertion of integral membrane proteins into the mitochondrial inner membrane. Essential for the activity and assembly of cytochrome c oxidase.</text>
</comment>
<comment type="subcellular location">
    <subcellularLocation>
        <location>Mitochondrion inner membrane</location>
        <topology>Multi-pass membrane protein</topology>
    </subcellularLocation>
</comment>
<comment type="similarity">
    <text evidence="2">Belongs to the OXA1/ALB3/YidC family.</text>
</comment>
<name>COX18_KLULA</name>
<organism>
    <name type="scientific">Kluyveromyces lactis (strain ATCC 8585 / CBS 2359 / DSM 70799 / NBRC 1267 / NRRL Y-1140 / WM37)</name>
    <name type="common">Yeast</name>
    <name type="synonym">Candida sphaerica</name>
    <dbReference type="NCBI Taxonomy" id="284590"/>
    <lineage>
        <taxon>Eukaryota</taxon>
        <taxon>Fungi</taxon>
        <taxon>Dikarya</taxon>
        <taxon>Ascomycota</taxon>
        <taxon>Saccharomycotina</taxon>
        <taxon>Saccharomycetes</taxon>
        <taxon>Saccharomycetales</taxon>
        <taxon>Saccharomycetaceae</taxon>
        <taxon>Kluyveromyces</taxon>
    </lineage>
</organism>
<dbReference type="EMBL" id="Y11373">
    <property type="protein sequence ID" value="CAA72198.1"/>
    <property type="molecule type" value="Genomic_DNA"/>
</dbReference>
<dbReference type="EMBL" id="CR382122">
    <property type="protein sequence ID" value="CAH02280.1"/>
    <property type="molecule type" value="Genomic_DNA"/>
</dbReference>
<dbReference type="RefSeq" id="XP_451887.1">
    <property type="nucleotide sequence ID" value="XM_451887.1"/>
</dbReference>
<dbReference type="FunCoup" id="P78990">
    <property type="interactions" value="82"/>
</dbReference>
<dbReference type="STRING" id="284590.P78990"/>
<dbReference type="PaxDb" id="284590-P78990"/>
<dbReference type="KEGG" id="kla:KLLA0_B08019g"/>
<dbReference type="eggNOG" id="KOG1239">
    <property type="taxonomic scope" value="Eukaryota"/>
</dbReference>
<dbReference type="HOGENOM" id="CLU_029282_2_1_1"/>
<dbReference type="InParanoid" id="P78990"/>
<dbReference type="OMA" id="WQRKRIV"/>
<dbReference type="Proteomes" id="UP000000598">
    <property type="component" value="Chromosome B"/>
</dbReference>
<dbReference type="GO" id="GO:0005743">
    <property type="term" value="C:mitochondrial inner membrane"/>
    <property type="evidence" value="ECO:0007669"/>
    <property type="project" value="UniProtKB-SubCell"/>
</dbReference>
<dbReference type="GO" id="GO:0032977">
    <property type="term" value="F:membrane insertase activity"/>
    <property type="evidence" value="ECO:0007669"/>
    <property type="project" value="InterPro"/>
</dbReference>
<dbReference type="GO" id="GO:0033617">
    <property type="term" value="P:mitochondrial cytochrome c oxidase assembly"/>
    <property type="evidence" value="ECO:0007669"/>
    <property type="project" value="TreeGrafter"/>
</dbReference>
<dbReference type="GO" id="GO:0032979">
    <property type="term" value="P:protein insertion into mitochondrial inner membrane from matrix"/>
    <property type="evidence" value="ECO:0007669"/>
    <property type="project" value="TreeGrafter"/>
</dbReference>
<dbReference type="CDD" id="cd20069">
    <property type="entry name" value="5TM_Oxa1-like"/>
    <property type="match status" value="1"/>
</dbReference>
<dbReference type="InterPro" id="IPR001708">
    <property type="entry name" value="YidC/ALB3/OXA1/COX18"/>
</dbReference>
<dbReference type="PANTHER" id="PTHR12428:SF65">
    <property type="entry name" value="CYTOCHROME C OXIDASE ASSEMBLY PROTEIN COX18, MITOCHONDRIAL"/>
    <property type="match status" value="1"/>
</dbReference>
<dbReference type="PANTHER" id="PTHR12428">
    <property type="entry name" value="OXA1"/>
    <property type="match status" value="1"/>
</dbReference>
<accession>P78990</accession>
<gene>
    <name type="primary">COX18</name>
    <name type="ordered locus">KLLA0B08019g</name>
</gene>
<protein>
    <recommendedName>
        <fullName>Cytochrome c oxidase assembly protein COX18, mitochondrial</fullName>
    </recommendedName>
    <alternativeName>
        <fullName>Cytochrome c oxidase assembly protein 18</fullName>
    </alternativeName>
</protein>
<reference key="1">
    <citation type="journal article" date="1997" name="Curr. Genet.">
        <title>Cloning and characterization of KlCOX18, a gene required for activity of cytochrome oxidase in Kluyveromyces lactis.</title>
        <authorList>
            <person name="Hikkel I."/>
            <person name="Gbelska Y."/>
            <person name="van der Aart Q.J.M."/>
            <person name="Lubecu G."/>
            <person name="Subik J."/>
        </authorList>
    </citation>
    <scope>NUCLEOTIDE SEQUENCE [GENOMIC DNA]</scope>
    <source>
        <strain>ATCC MYA-539 / JBD100</strain>
    </source>
</reference>
<reference key="2">
    <citation type="journal article" date="2004" name="Nature">
        <title>Genome evolution in yeasts.</title>
        <authorList>
            <person name="Dujon B."/>
            <person name="Sherman D."/>
            <person name="Fischer G."/>
            <person name="Durrens P."/>
            <person name="Casaregola S."/>
            <person name="Lafontaine I."/>
            <person name="de Montigny J."/>
            <person name="Marck C."/>
            <person name="Neuveglise C."/>
            <person name="Talla E."/>
            <person name="Goffard N."/>
            <person name="Frangeul L."/>
            <person name="Aigle M."/>
            <person name="Anthouard V."/>
            <person name="Babour A."/>
            <person name="Barbe V."/>
            <person name="Barnay S."/>
            <person name="Blanchin S."/>
            <person name="Beckerich J.-M."/>
            <person name="Beyne E."/>
            <person name="Bleykasten C."/>
            <person name="Boisrame A."/>
            <person name="Boyer J."/>
            <person name="Cattolico L."/>
            <person name="Confanioleri F."/>
            <person name="de Daruvar A."/>
            <person name="Despons L."/>
            <person name="Fabre E."/>
            <person name="Fairhead C."/>
            <person name="Ferry-Dumazet H."/>
            <person name="Groppi A."/>
            <person name="Hantraye F."/>
            <person name="Hennequin C."/>
            <person name="Jauniaux N."/>
            <person name="Joyet P."/>
            <person name="Kachouri R."/>
            <person name="Kerrest A."/>
            <person name="Koszul R."/>
            <person name="Lemaire M."/>
            <person name="Lesur I."/>
            <person name="Ma L."/>
            <person name="Muller H."/>
            <person name="Nicaud J.-M."/>
            <person name="Nikolski M."/>
            <person name="Oztas S."/>
            <person name="Ozier-Kalogeropoulos O."/>
            <person name="Pellenz S."/>
            <person name="Potier S."/>
            <person name="Richard G.-F."/>
            <person name="Straub M.-L."/>
            <person name="Suleau A."/>
            <person name="Swennen D."/>
            <person name="Tekaia F."/>
            <person name="Wesolowski-Louvel M."/>
            <person name="Westhof E."/>
            <person name="Wirth B."/>
            <person name="Zeniou-Meyer M."/>
            <person name="Zivanovic Y."/>
            <person name="Bolotin-Fukuhara M."/>
            <person name="Thierry A."/>
            <person name="Bouchier C."/>
            <person name="Caudron B."/>
            <person name="Scarpelli C."/>
            <person name="Gaillardin C."/>
            <person name="Weissenbach J."/>
            <person name="Wincker P."/>
            <person name="Souciet J.-L."/>
        </authorList>
    </citation>
    <scope>NUCLEOTIDE SEQUENCE [LARGE SCALE GENOMIC DNA]</scope>
    <source>
        <strain>ATCC 8585 / CBS 2359 / DSM 70799 / NBRC 1267 / NRRL Y-1140 / WM37</strain>
    </source>
</reference>
<sequence>MLLRRLPAVHFAKGSRQFGSLQAIADSFVQLHDASGVPWLVLIPTATFALRTVFTLPLSIWQRKRIVKQQELRKVVQSVPPVVKLRLASMTAKANDEELTSSGSAIQTKEETVGALQRGKRQLTPDQITMLSLKEMRKRQKVLFKKYNVQMWKNSVLPLVQVPLWVTMSMGLRKLTDSRLVDTNMPHAHVLQDLSETSWLTHIGSLDLSLPLDAAPMLIPIILGTVSMINVEYNGKTMQATAVGTSGITTATDTQSRTSQTVNSILTATRLSTIFLIGVSTQASVLLSLYWITSQVYSLIQNRILDLLWPYQR</sequence>
<feature type="transit peptide" description="Mitochondrion" evidence="1">
    <location>
        <begin position="1"/>
        <end status="unknown"/>
    </location>
</feature>
<feature type="chain" id="PRO_0000020356" description="Cytochrome c oxidase assembly protein COX18, mitochondrial">
    <location>
        <begin status="unknown"/>
        <end position="313"/>
    </location>
</feature>
<feature type="topological domain" description="Mitochondrial intermembrane" evidence="2">
    <location>
        <begin status="unknown"/>
        <end position="208"/>
    </location>
</feature>
<feature type="transmembrane region" description="Helical" evidence="1">
    <location>
        <begin position="209"/>
        <end position="229"/>
    </location>
</feature>
<feature type="topological domain" description="Mitochondrial matrix" evidence="2">
    <location>
        <begin position="230"/>
        <end position="272"/>
    </location>
</feature>
<feature type="transmembrane region" description="Helical" evidence="1">
    <location>
        <begin position="273"/>
        <end position="293"/>
    </location>
</feature>
<feature type="topological domain" description="Mitochondrial intermembrane" evidence="2">
    <location>
        <begin position="294"/>
        <end position="313"/>
    </location>
</feature>
<proteinExistence type="inferred from homology"/>
<evidence type="ECO:0000255" key="1"/>
<evidence type="ECO:0000305" key="2"/>